<name>FADB_SHISS</name>
<keyword id="KW-0276">Fatty acid metabolism</keyword>
<keyword id="KW-0413">Isomerase</keyword>
<keyword id="KW-0442">Lipid degradation</keyword>
<keyword id="KW-0443">Lipid metabolism</keyword>
<keyword id="KW-0456">Lyase</keyword>
<keyword id="KW-0511">Multifunctional enzyme</keyword>
<keyword id="KW-0520">NAD</keyword>
<keyword id="KW-0560">Oxidoreductase</keyword>
<keyword id="KW-1185">Reference proteome</keyword>
<proteinExistence type="inferred from homology"/>
<reference key="1">
    <citation type="journal article" date="2005" name="Nucleic Acids Res.">
        <title>Genome dynamics and diversity of Shigella species, the etiologic agents of bacillary dysentery.</title>
        <authorList>
            <person name="Yang F."/>
            <person name="Yang J."/>
            <person name="Zhang X."/>
            <person name="Chen L."/>
            <person name="Jiang Y."/>
            <person name="Yan Y."/>
            <person name="Tang X."/>
            <person name="Wang J."/>
            <person name="Xiong Z."/>
            <person name="Dong J."/>
            <person name="Xue Y."/>
            <person name="Zhu Y."/>
            <person name="Xu X."/>
            <person name="Sun L."/>
            <person name="Chen S."/>
            <person name="Nie H."/>
            <person name="Peng J."/>
            <person name="Xu J."/>
            <person name="Wang Y."/>
            <person name="Yuan Z."/>
            <person name="Wen Y."/>
            <person name="Yao Z."/>
            <person name="Shen Y."/>
            <person name="Qiang B."/>
            <person name="Hou Y."/>
            <person name="Yu J."/>
            <person name="Jin Q."/>
        </authorList>
    </citation>
    <scope>NUCLEOTIDE SEQUENCE [LARGE SCALE GENOMIC DNA]</scope>
    <source>
        <strain>Ss046</strain>
    </source>
</reference>
<dbReference type="EC" id="4.2.1.17" evidence="1"/>
<dbReference type="EC" id="5.1.2.3" evidence="1"/>
<dbReference type="EC" id="5.3.3.8" evidence="1"/>
<dbReference type="EC" id="1.1.1.35" evidence="1"/>
<dbReference type="EMBL" id="CP000038">
    <property type="protein sequence ID" value="AAZ90541.1"/>
    <property type="molecule type" value="Genomic_DNA"/>
</dbReference>
<dbReference type="RefSeq" id="WP_000965936.1">
    <property type="nucleotide sequence ID" value="NC_007384.1"/>
</dbReference>
<dbReference type="SMR" id="Q3YVC1"/>
<dbReference type="KEGG" id="ssn:SSON_4019"/>
<dbReference type="HOGENOM" id="CLU_009834_16_3_6"/>
<dbReference type="UniPathway" id="UPA00659"/>
<dbReference type="Proteomes" id="UP000002529">
    <property type="component" value="Chromosome"/>
</dbReference>
<dbReference type="GO" id="GO:0036125">
    <property type="term" value="C:fatty acid beta-oxidation multienzyme complex"/>
    <property type="evidence" value="ECO:0007669"/>
    <property type="project" value="InterPro"/>
</dbReference>
<dbReference type="GO" id="GO:0008692">
    <property type="term" value="F:3-hydroxybutyryl-CoA epimerase activity"/>
    <property type="evidence" value="ECO:0007669"/>
    <property type="project" value="UniProtKB-UniRule"/>
</dbReference>
<dbReference type="GO" id="GO:0004165">
    <property type="term" value="F:delta(3)-delta(2)-enoyl-CoA isomerase activity"/>
    <property type="evidence" value="ECO:0007669"/>
    <property type="project" value="UniProtKB-UniRule"/>
</dbReference>
<dbReference type="GO" id="GO:0004300">
    <property type="term" value="F:enoyl-CoA hydratase activity"/>
    <property type="evidence" value="ECO:0007669"/>
    <property type="project" value="UniProtKB-UniRule"/>
</dbReference>
<dbReference type="GO" id="GO:0016509">
    <property type="term" value="F:long-chain-3-hydroxyacyl-CoA dehydrogenase activity"/>
    <property type="evidence" value="ECO:0007669"/>
    <property type="project" value="TreeGrafter"/>
</dbReference>
<dbReference type="GO" id="GO:0070403">
    <property type="term" value="F:NAD+ binding"/>
    <property type="evidence" value="ECO:0007669"/>
    <property type="project" value="InterPro"/>
</dbReference>
<dbReference type="GO" id="GO:0006635">
    <property type="term" value="P:fatty acid beta-oxidation"/>
    <property type="evidence" value="ECO:0007669"/>
    <property type="project" value="UniProtKB-UniRule"/>
</dbReference>
<dbReference type="CDD" id="cd06558">
    <property type="entry name" value="crotonase-like"/>
    <property type="match status" value="1"/>
</dbReference>
<dbReference type="FunFam" id="1.10.1040.50:FF:000001">
    <property type="entry name" value="Fatty acid oxidation complex subunit alpha"/>
    <property type="match status" value="1"/>
</dbReference>
<dbReference type="FunFam" id="3.90.226.10:FF:000018">
    <property type="entry name" value="Fatty acid oxidation complex subunit alpha"/>
    <property type="match status" value="1"/>
</dbReference>
<dbReference type="FunFam" id="3.40.50.720:FF:000009">
    <property type="entry name" value="Fatty oxidation complex, alpha subunit"/>
    <property type="match status" value="1"/>
</dbReference>
<dbReference type="Gene3D" id="1.10.1040.50">
    <property type="match status" value="1"/>
</dbReference>
<dbReference type="Gene3D" id="3.90.226.10">
    <property type="entry name" value="2-enoyl-CoA Hydratase, Chain A, domain 1"/>
    <property type="match status" value="1"/>
</dbReference>
<dbReference type="Gene3D" id="3.40.50.720">
    <property type="entry name" value="NAD(P)-binding Rossmann-like Domain"/>
    <property type="match status" value="1"/>
</dbReference>
<dbReference type="HAMAP" id="MF_01621">
    <property type="entry name" value="FadB"/>
    <property type="match status" value="1"/>
</dbReference>
<dbReference type="InterPro" id="IPR006180">
    <property type="entry name" value="3-OHacyl-CoA_DH_CS"/>
</dbReference>
<dbReference type="InterPro" id="IPR006176">
    <property type="entry name" value="3-OHacyl-CoA_DH_NAD-bd"/>
</dbReference>
<dbReference type="InterPro" id="IPR006108">
    <property type="entry name" value="3HC_DH_C"/>
</dbReference>
<dbReference type="InterPro" id="IPR008927">
    <property type="entry name" value="6-PGluconate_DH-like_C_sf"/>
</dbReference>
<dbReference type="InterPro" id="IPR029045">
    <property type="entry name" value="ClpP/crotonase-like_dom_sf"/>
</dbReference>
<dbReference type="InterPro" id="IPR018376">
    <property type="entry name" value="Enoyl-CoA_hyd/isom_CS"/>
</dbReference>
<dbReference type="InterPro" id="IPR001753">
    <property type="entry name" value="Enoyl-CoA_hydra/iso"/>
</dbReference>
<dbReference type="InterPro" id="IPR050136">
    <property type="entry name" value="FA_oxidation_alpha_subunit"/>
</dbReference>
<dbReference type="InterPro" id="IPR012799">
    <property type="entry name" value="FadB"/>
</dbReference>
<dbReference type="InterPro" id="IPR036291">
    <property type="entry name" value="NAD(P)-bd_dom_sf"/>
</dbReference>
<dbReference type="NCBIfam" id="TIGR02437">
    <property type="entry name" value="FadB"/>
    <property type="match status" value="1"/>
</dbReference>
<dbReference type="NCBIfam" id="NF008727">
    <property type="entry name" value="PRK11730.1"/>
    <property type="match status" value="1"/>
</dbReference>
<dbReference type="PANTHER" id="PTHR43612">
    <property type="entry name" value="TRIFUNCTIONAL ENZYME SUBUNIT ALPHA"/>
    <property type="match status" value="1"/>
</dbReference>
<dbReference type="PANTHER" id="PTHR43612:SF3">
    <property type="entry name" value="TRIFUNCTIONAL ENZYME SUBUNIT ALPHA, MITOCHONDRIAL"/>
    <property type="match status" value="1"/>
</dbReference>
<dbReference type="Pfam" id="PF00725">
    <property type="entry name" value="3HCDH"/>
    <property type="match status" value="2"/>
</dbReference>
<dbReference type="Pfam" id="PF02737">
    <property type="entry name" value="3HCDH_N"/>
    <property type="match status" value="1"/>
</dbReference>
<dbReference type="Pfam" id="PF00378">
    <property type="entry name" value="ECH_1"/>
    <property type="match status" value="1"/>
</dbReference>
<dbReference type="SUPFAM" id="SSF48179">
    <property type="entry name" value="6-phosphogluconate dehydrogenase C-terminal domain-like"/>
    <property type="match status" value="2"/>
</dbReference>
<dbReference type="SUPFAM" id="SSF52096">
    <property type="entry name" value="ClpP/crotonase"/>
    <property type="match status" value="1"/>
</dbReference>
<dbReference type="SUPFAM" id="SSF51735">
    <property type="entry name" value="NAD(P)-binding Rossmann-fold domains"/>
    <property type="match status" value="1"/>
</dbReference>
<dbReference type="PROSITE" id="PS00067">
    <property type="entry name" value="3HCDH"/>
    <property type="match status" value="1"/>
</dbReference>
<dbReference type="PROSITE" id="PS00166">
    <property type="entry name" value="ENOYL_COA_HYDRATASE"/>
    <property type="match status" value="1"/>
</dbReference>
<evidence type="ECO:0000255" key="1">
    <source>
        <dbReference type="HAMAP-Rule" id="MF_01621"/>
    </source>
</evidence>
<evidence type="ECO:0000256" key="2">
    <source>
        <dbReference type="SAM" id="MobiDB-lite"/>
    </source>
</evidence>
<sequence>MLYKGDTLYLDWLEDGIAELVFDAPGSVNKLDTATVASLGEAIGVLEQQSDLKGLLLRSNKAAFIVGADITEFLSLFLVPEEQLSQWLHFANSVFNRLEDLPVPTIAAVNGYALGGGCECVLATDYRLATPDLRIGLPETKLGIMPGFGGSVRMPRMLGADSALEIIAAGKDVGADQALKIGLVDGVVKAEKLVEGAKAVLRQAINGDLDWKAKRQPKLEPLKLSKIEATMSFTIAKGMVAQTAGKHYPAPITAVKTIEAAARFGREEALNLENKSFVPLAHTNEARALVGIFLNDQYVKGKAKKLTKDVETPKQAAVLGAGIMGGGIAYQSAWKGVPVVMKDINDKSLTLGMTEAAKLLNKQLERGKIDGLKLAGVISTIHPTLDYAGFDRVDIVVEAVVENPKVKKAVLAETEQKVRQDTVLASNTSTIPISELANALERPENFCGMHFFNPVHRMPLVEIIRGEKSSDETIAKVVAWASKMGKTPIVVNDCPGFFVNRVLFPYFAGFSQLLRDGADFRKIDKVMEKQFGWPMGPAYLLDVVGIDTAHHAQAVMAAGFPQRMQKDYRDAIDALFDANRFGQKNGLGFWRYKEDSKGKPKKEEDAAVEDLLAEVSQPKRDFSEEEIIARMMIPMVNEVVRCLEEGIIATPAEADMALVYGLGFPPFHGGAFRWLDTLGSAKYLDMAQQYQHLGPLYEVPEGLRNKARHNEPYYPPVEPARPVGDLKTA</sequence>
<feature type="chain" id="PRO_0000109290" description="Fatty acid oxidation complex subunit alpha">
    <location>
        <begin position="1"/>
        <end position="729"/>
    </location>
</feature>
<feature type="region of interest" description="Enoyl-CoA hydratase/isomerase" evidence="1">
    <location>
        <begin position="1"/>
        <end position="189"/>
    </location>
</feature>
<feature type="region of interest" description="3-hydroxyacyl-CoA dehydrogenase" evidence="1">
    <location>
        <begin position="311"/>
        <end position="729"/>
    </location>
</feature>
<feature type="region of interest" description="Disordered" evidence="2">
    <location>
        <begin position="708"/>
        <end position="729"/>
    </location>
</feature>
<feature type="active site" description="For 3-hydroxyacyl-CoA dehydrogenase activity" evidence="1">
    <location>
        <position position="450"/>
    </location>
</feature>
<feature type="binding site" evidence="1">
    <location>
        <position position="296"/>
    </location>
    <ligand>
        <name>substrate</name>
    </ligand>
</feature>
<feature type="binding site" evidence="1">
    <location>
        <position position="324"/>
    </location>
    <ligand>
        <name>NAD(+)</name>
        <dbReference type="ChEBI" id="CHEBI:57540"/>
    </ligand>
</feature>
<feature type="binding site" evidence="1">
    <location>
        <position position="343"/>
    </location>
    <ligand>
        <name>NAD(+)</name>
        <dbReference type="ChEBI" id="CHEBI:57540"/>
    </ligand>
</feature>
<feature type="binding site" evidence="1">
    <location>
        <begin position="400"/>
        <end position="402"/>
    </location>
    <ligand>
        <name>NAD(+)</name>
        <dbReference type="ChEBI" id="CHEBI:57540"/>
    </ligand>
</feature>
<feature type="binding site" evidence="1">
    <location>
        <position position="407"/>
    </location>
    <ligand>
        <name>NAD(+)</name>
        <dbReference type="ChEBI" id="CHEBI:57540"/>
    </ligand>
</feature>
<feature type="binding site" evidence="1">
    <location>
        <position position="429"/>
    </location>
    <ligand>
        <name>NAD(+)</name>
        <dbReference type="ChEBI" id="CHEBI:57540"/>
    </ligand>
</feature>
<feature type="binding site" evidence="1">
    <location>
        <position position="453"/>
    </location>
    <ligand>
        <name>NAD(+)</name>
        <dbReference type="ChEBI" id="CHEBI:57540"/>
    </ligand>
</feature>
<feature type="binding site" evidence="1">
    <location>
        <position position="500"/>
    </location>
    <ligand>
        <name>substrate</name>
    </ligand>
</feature>
<feature type="binding site" evidence="1">
    <location>
        <position position="660"/>
    </location>
    <ligand>
        <name>substrate</name>
    </ligand>
</feature>
<feature type="site" description="Important for catalytic activity" evidence="1">
    <location>
        <position position="119"/>
    </location>
</feature>
<feature type="site" description="Important for catalytic activity" evidence="1">
    <location>
        <position position="139"/>
    </location>
</feature>
<gene>
    <name evidence="1" type="primary">fadB</name>
    <name type="ordered locus">SSON_4019</name>
</gene>
<accession>Q3YVC1</accession>
<comment type="function">
    <text evidence="1">Involved in the aerobic and anaerobic degradation of long-chain fatty acids via beta-oxidation cycle. Catalyzes the formation of 3-oxoacyl-CoA from enoyl-CoA via L-3-hydroxyacyl-CoA. It can also use D-3-hydroxyacyl-CoA and cis-3-enoyl-CoA as substrate.</text>
</comment>
<comment type="catalytic activity">
    <reaction evidence="1">
        <text>a (3S)-3-hydroxyacyl-CoA + NAD(+) = a 3-oxoacyl-CoA + NADH + H(+)</text>
        <dbReference type="Rhea" id="RHEA:22432"/>
        <dbReference type="ChEBI" id="CHEBI:15378"/>
        <dbReference type="ChEBI" id="CHEBI:57318"/>
        <dbReference type="ChEBI" id="CHEBI:57540"/>
        <dbReference type="ChEBI" id="CHEBI:57945"/>
        <dbReference type="ChEBI" id="CHEBI:90726"/>
        <dbReference type="EC" id="1.1.1.35"/>
    </reaction>
</comment>
<comment type="catalytic activity">
    <reaction evidence="1">
        <text>a (3S)-3-hydroxyacyl-CoA = a (2E)-enoyl-CoA + H2O</text>
        <dbReference type="Rhea" id="RHEA:16105"/>
        <dbReference type="ChEBI" id="CHEBI:15377"/>
        <dbReference type="ChEBI" id="CHEBI:57318"/>
        <dbReference type="ChEBI" id="CHEBI:58856"/>
        <dbReference type="EC" id="4.2.1.17"/>
    </reaction>
</comment>
<comment type="catalytic activity">
    <reaction evidence="1">
        <text>a 4-saturated-(3S)-3-hydroxyacyl-CoA = a (3E)-enoyl-CoA + H2O</text>
        <dbReference type="Rhea" id="RHEA:20724"/>
        <dbReference type="ChEBI" id="CHEBI:15377"/>
        <dbReference type="ChEBI" id="CHEBI:58521"/>
        <dbReference type="ChEBI" id="CHEBI:137480"/>
        <dbReference type="EC" id="4.2.1.17"/>
    </reaction>
</comment>
<comment type="catalytic activity">
    <reaction evidence="1">
        <text>(3S)-3-hydroxybutanoyl-CoA = (3R)-3-hydroxybutanoyl-CoA</text>
        <dbReference type="Rhea" id="RHEA:21760"/>
        <dbReference type="ChEBI" id="CHEBI:57315"/>
        <dbReference type="ChEBI" id="CHEBI:57316"/>
        <dbReference type="EC" id="5.1.2.3"/>
    </reaction>
</comment>
<comment type="catalytic activity">
    <reaction evidence="1">
        <text>a (3Z)-enoyl-CoA = a 4-saturated (2E)-enoyl-CoA</text>
        <dbReference type="Rhea" id="RHEA:45900"/>
        <dbReference type="ChEBI" id="CHEBI:85097"/>
        <dbReference type="ChEBI" id="CHEBI:85489"/>
        <dbReference type="EC" id="5.3.3.8"/>
    </reaction>
</comment>
<comment type="catalytic activity">
    <reaction evidence="1">
        <text>a (3E)-enoyl-CoA = a 4-saturated (2E)-enoyl-CoA</text>
        <dbReference type="Rhea" id="RHEA:45228"/>
        <dbReference type="ChEBI" id="CHEBI:58521"/>
        <dbReference type="ChEBI" id="CHEBI:85097"/>
        <dbReference type="EC" id="5.3.3.8"/>
    </reaction>
</comment>
<comment type="pathway">
    <text evidence="1">Lipid metabolism; fatty acid beta-oxidation.</text>
</comment>
<comment type="subunit">
    <text evidence="1">Heterotetramer of two alpha chains (FadB) and two beta chains (FadA).</text>
</comment>
<comment type="similarity">
    <text evidence="1">In the N-terminal section; belongs to the enoyl-CoA hydratase/isomerase family.</text>
</comment>
<comment type="similarity">
    <text evidence="1">In the C-terminal section; belongs to the 3-hydroxyacyl-CoA dehydrogenase family.</text>
</comment>
<organism>
    <name type="scientific">Shigella sonnei (strain Ss046)</name>
    <dbReference type="NCBI Taxonomy" id="300269"/>
    <lineage>
        <taxon>Bacteria</taxon>
        <taxon>Pseudomonadati</taxon>
        <taxon>Pseudomonadota</taxon>
        <taxon>Gammaproteobacteria</taxon>
        <taxon>Enterobacterales</taxon>
        <taxon>Enterobacteriaceae</taxon>
        <taxon>Shigella</taxon>
    </lineage>
</organism>
<protein>
    <recommendedName>
        <fullName evidence="1">Fatty acid oxidation complex subunit alpha</fullName>
    </recommendedName>
    <domain>
        <recommendedName>
            <fullName evidence="1">Enoyl-CoA hydratase/Delta(3)-cis-Delta(2)-trans-enoyl-CoA isomerase/3-hydroxybutyryl-CoA epimerase</fullName>
            <ecNumber evidence="1">4.2.1.17</ecNumber>
            <ecNumber evidence="1">5.1.2.3</ecNumber>
            <ecNumber evidence="1">5.3.3.8</ecNumber>
        </recommendedName>
    </domain>
    <domain>
        <recommendedName>
            <fullName evidence="1">3-hydroxyacyl-CoA dehydrogenase</fullName>
            <ecNumber evidence="1">1.1.1.35</ecNumber>
        </recommendedName>
    </domain>
</protein>